<proteinExistence type="inferred from homology"/>
<evidence type="ECO:0000250" key="1"/>
<evidence type="ECO:0000255" key="2">
    <source>
        <dbReference type="HAMAP-Rule" id="MF_00162"/>
    </source>
</evidence>
<accession>Q9PC29</accession>
<protein>
    <recommendedName>
        <fullName evidence="2">Glutathione synthetase</fullName>
        <ecNumber evidence="2">6.3.2.3</ecNumber>
    </recommendedName>
    <alternativeName>
        <fullName evidence="2">GSH synthetase</fullName>
        <shortName evidence="2">GSH-S</shortName>
        <shortName evidence="2">GSHase</shortName>
    </alternativeName>
    <alternativeName>
        <fullName evidence="2">Glutathione synthase</fullName>
    </alternativeName>
</protein>
<sequence length="314" mass="34714">MPLDVVVVMDPITGIKIAKDTTFALLLEGQRRSHRLHYVHPGSLSLNEGRTFAQIAPLQVRDNKTDWYTLGEFSETQLGQGQIILMRKDPPVNAEFIYDTQLLSIAQAAGAQVINHPQGLRDLNEKLAAQLFPQCCPPTLISRDMRALKMFVQKQEQAILKPLDGMGGHSIFRSSNGDPNLNVILETLTDGGRTLAIAQRYLQQIIEGDKRILLIDGVPIDHCLARIPQGDEFRGNMAAGGRGESRPLNEHDRWIAAQVGPEMRRRGMRFVGIDVIGDYLTEINVTSPTCLRELDAQCGLNIAGQLFDAIETGG</sequence>
<reference key="1">
    <citation type="journal article" date="2000" name="Nature">
        <title>The genome sequence of the plant pathogen Xylella fastidiosa.</title>
        <authorList>
            <person name="Simpson A.J.G."/>
            <person name="Reinach F.C."/>
            <person name="Arruda P."/>
            <person name="Abreu F.A."/>
            <person name="Acencio M."/>
            <person name="Alvarenga R."/>
            <person name="Alves L.M.C."/>
            <person name="Araya J.E."/>
            <person name="Baia G.S."/>
            <person name="Baptista C.S."/>
            <person name="Barros M.H."/>
            <person name="Bonaccorsi E.D."/>
            <person name="Bordin S."/>
            <person name="Bove J.M."/>
            <person name="Briones M.R.S."/>
            <person name="Bueno M.R.P."/>
            <person name="Camargo A.A."/>
            <person name="Camargo L.E.A."/>
            <person name="Carraro D.M."/>
            <person name="Carrer H."/>
            <person name="Colauto N.B."/>
            <person name="Colombo C."/>
            <person name="Costa F.F."/>
            <person name="Costa M.C.R."/>
            <person name="Costa-Neto C.M."/>
            <person name="Coutinho L.L."/>
            <person name="Cristofani M."/>
            <person name="Dias-Neto E."/>
            <person name="Docena C."/>
            <person name="El-Dorry H."/>
            <person name="Facincani A.P."/>
            <person name="Ferreira A.J.S."/>
            <person name="Ferreira V.C.A."/>
            <person name="Ferro J.A."/>
            <person name="Fraga J.S."/>
            <person name="Franca S.C."/>
            <person name="Franco M.C."/>
            <person name="Frohme M."/>
            <person name="Furlan L.R."/>
            <person name="Garnier M."/>
            <person name="Goldman G.H."/>
            <person name="Goldman M.H.S."/>
            <person name="Gomes S.L."/>
            <person name="Gruber A."/>
            <person name="Ho P.L."/>
            <person name="Hoheisel J.D."/>
            <person name="Junqueira M.L."/>
            <person name="Kemper E.L."/>
            <person name="Kitajima J.P."/>
            <person name="Krieger J.E."/>
            <person name="Kuramae E.E."/>
            <person name="Laigret F."/>
            <person name="Lambais M.R."/>
            <person name="Leite L.C.C."/>
            <person name="Lemos E.G.M."/>
            <person name="Lemos M.V.F."/>
            <person name="Lopes S.A."/>
            <person name="Lopes C.R."/>
            <person name="Machado J.A."/>
            <person name="Machado M.A."/>
            <person name="Madeira A.M.B.N."/>
            <person name="Madeira H.M.F."/>
            <person name="Marino C.L."/>
            <person name="Marques M.V."/>
            <person name="Martins E.A.L."/>
            <person name="Martins E.M.F."/>
            <person name="Matsukuma A.Y."/>
            <person name="Menck C.F.M."/>
            <person name="Miracca E.C."/>
            <person name="Miyaki C.Y."/>
            <person name="Monteiro-Vitorello C.B."/>
            <person name="Moon D.H."/>
            <person name="Nagai M.A."/>
            <person name="Nascimento A.L.T.O."/>
            <person name="Netto L.E.S."/>
            <person name="Nhani A. Jr."/>
            <person name="Nobrega F.G."/>
            <person name="Nunes L.R."/>
            <person name="Oliveira M.A."/>
            <person name="de Oliveira M.C."/>
            <person name="de Oliveira R.C."/>
            <person name="Palmieri D.A."/>
            <person name="Paris A."/>
            <person name="Peixoto B.R."/>
            <person name="Pereira G.A.G."/>
            <person name="Pereira H.A. Jr."/>
            <person name="Pesquero J.B."/>
            <person name="Quaggio R.B."/>
            <person name="Roberto P.G."/>
            <person name="Rodrigues V."/>
            <person name="de Rosa A.J.M."/>
            <person name="de Rosa V.E. Jr."/>
            <person name="de Sa R.G."/>
            <person name="Santelli R.V."/>
            <person name="Sawasaki H.E."/>
            <person name="da Silva A.C.R."/>
            <person name="da Silva A.M."/>
            <person name="da Silva F.R."/>
            <person name="Silva W.A. Jr."/>
            <person name="da Silveira J.F."/>
            <person name="Silvestri M.L.Z."/>
            <person name="Siqueira W.J."/>
            <person name="de Souza A.A."/>
            <person name="de Souza A.P."/>
            <person name="Terenzi M.F."/>
            <person name="Truffi D."/>
            <person name="Tsai S.M."/>
            <person name="Tsuhako M.H."/>
            <person name="Vallada H."/>
            <person name="Van Sluys M.A."/>
            <person name="Verjovski-Almeida S."/>
            <person name="Vettore A.L."/>
            <person name="Zago M.A."/>
            <person name="Zatz M."/>
            <person name="Meidanis J."/>
            <person name="Setubal J.C."/>
        </authorList>
    </citation>
    <scope>NUCLEOTIDE SEQUENCE [LARGE SCALE GENOMIC DNA]</scope>
    <source>
        <strain>9a5c</strain>
    </source>
</reference>
<dbReference type="EC" id="6.3.2.3" evidence="2"/>
<dbReference type="EMBL" id="AE003849">
    <property type="protein sequence ID" value="AAF84758.1"/>
    <property type="molecule type" value="Genomic_DNA"/>
</dbReference>
<dbReference type="PIR" id="F82616">
    <property type="entry name" value="F82616"/>
</dbReference>
<dbReference type="RefSeq" id="WP_010894415.1">
    <property type="nucleotide sequence ID" value="NC_002488.3"/>
</dbReference>
<dbReference type="SMR" id="Q9PC29"/>
<dbReference type="STRING" id="160492.XF_1956"/>
<dbReference type="KEGG" id="xfa:XF_1956"/>
<dbReference type="eggNOG" id="COG0189">
    <property type="taxonomic scope" value="Bacteria"/>
</dbReference>
<dbReference type="HOGENOM" id="CLU_068239_0_0_6"/>
<dbReference type="UniPathway" id="UPA00142">
    <property type="reaction ID" value="UER00210"/>
</dbReference>
<dbReference type="Proteomes" id="UP000000812">
    <property type="component" value="Chromosome"/>
</dbReference>
<dbReference type="GO" id="GO:0005737">
    <property type="term" value="C:cytoplasm"/>
    <property type="evidence" value="ECO:0007669"/>
    <property type="project" value="TreeGrafter"/>
</dbReference>
<dbReference type="GO" id="GO:0005524">
    <property type="term" value="F:ATP binding"/>
    <property type="evidence" value="ECO:0007669"/>
    <property type="project" value="UniProtKB-UniRule"/>
</dbReference>
<dbReference type="GO" id="GO:0004363">
    <property type="term" value="F:glutathione synthase activity"/>
    <property type="evidence" value="ECO:0007669"/>
    <property type="project" value="UniProtKB-UniRule"/>
</dbReference>
<dbReference type="GO" id="GO:0046872">
    <property type="term" value="F:metal ion binding"/>
    <property type="evidence" value="ECO:0007669"/>
    <property type="project" value="UniProtKB-KW"/>
</dbReference>
<dbReference type="FunFam" id="3.30.1490.20:FF:000009">
    <property type="entry name" value="Glutathione synthetase"/>
    <property type="match status" value="1"/>
</dbReference>
<dbReference type="FunFam" id="3.40.50.20:FF:000009">
    <property type="entry name" value="Glutathione synthetase"/>
    <property type="match status" value="1"/>
</dbReference>
<dbReference type="Gene3D" id="3.40.50.20">
    <property type="match status" value="1"/>
</dbReference>
<dbReference type="Gene3D" id="3.30.1490.20">
    <property type="entry name" value="ATP-grasp fold, A domain"/>
    <property type="match status" value="1"/>
</dbReference>
<dbReference type="Gene3D" id="3.30.470.20">
    <property type="entry name" value="ATP-grasp fold, B domain"/>
    <property type="match status" value="1"/>
</dbReference>
<dbReference type="HAMAP" id="MF_00162">
    <property type="entry name" value="GSH_S"/>
    <property type="match status" value="1"/>
</dbReference>
<dbReference type="InterPro" id="IPR011761">
    <property type="entry name" value="ATP-grasp"/>
</dbReference>
<dbReference type="InterPro" id="IPR013815">
    <property type="entry name" value="ATP_grasp_subdomain_1"/>
</dbReference>
<dbReference type="InterPro" id="IPR006284">
    <property type="entry name" value="Glut_synth_pro"/>
</dbReference>
<dbReference type="InterPro" id="IPR004218">
    <property type="entry name" value="GSHS_ATP-bd"/>
</dbReference>
<dbReference type="InterPro" id="IPR004215">
    <property type="entry name" value="GSHS_N"/>
</dbReference>
<dbReference type="InterPro" id="IPR016185">
    <property type="entry name" value="PreATP-grasp_dom_sf"/>
</dbReference>
<dbReference type="NCBIfam" id="TIGR01380">
    <property type="entry name" value="glut_syn"/>
    <property type="match status" value="1"/>
</dbReference>
<dbReference type="NCBIfam" id="NF003573">
    <property type="entry name" value="PRK05246.1"/>
    <property type="match status" value="1"/>
</dbReference>
<dbReference type="PANTHER" id="PTHR21621:SF4">
    <property type="entry name" value="GLUTATHIONE SYNTHETASE"/>
    <property type="match status" value="1"/>
</dbReference>
<dbReference type="PANTHER" id="PTHR21621">
    <property type="entry name" value="RIBOSOMAL PROTEIN S6 MODIFICATION PROTEIN"/>
    <property type="match status" value="1"/>
</dbReference>
<dbReference type="Pfam" id="PF02955">
    <property type="entry name" value="GSH-S_ATP"/>
    <property type="match status" value="1"/>
</dbReference>
<dbReference type="Pfam" id="PF02951">
    <property type="entry name" value="GSH-S_N"/>
    <property type="match status" value="1"/>
</dbReference>
<dbReference type="SUPFAM" id="SSF56059">
    <property type="entry name" value="Glutathione synthetase ATP-binding domain-like"/>
    <property type="match status" value="1"/>
</dbReference>
<dbReference type="SUPFAM" id="SSF52440">
    <property type="entry name" value="PreATP-grasp domain"/>
    <property type="match status" value="1"/>
</dbReference>
<dbReference type="PROSITE" id="PS50975">
    <property type="entry name" value="ATP_GRASP"/>
    <property type="match status" value="1"/>
</dbReference>
<comment type="catalytic activity">
    <reaction evidence="2">
        <text>gamma-L-glutamyl-L-cysteine + glycine + ATP = glutathione + ADP + phosphate + H(+)</text>
        <dbReference type="Rhea" id="RHEA:13557"/>
        <dbReference type="ChEBI" id="CHEBI:15378"/>
        <dbReference type="ChEBI" id="CHEBI:30616"/>
        <dbReference type="ChEBI" id="CHEBI:43474"/>
        <dbReference type="ChEBI" id="CHEBI:57305"/>
        <dbReference type="ChEBI" id="CHEBI:57925"/>
        <dbReference type="ChEBI" id="CHEBI:58173"/>
        <dbReference type="ChEBI" id="CHEBI:456216"/>
        <dbReference type="EC" id="6.3.2.3"/>
    </reaction>
</comment>
<comment type="cofactor">
    <cofactor evidence="1">
        <name>Mg(2+)</name>
        <dbReference type="ChEBI" id="CHEBI:18420"/>
    </cofactor>
    <cofactor evidence="1">
        <name>Mn(2+)</name>
        <dbReference type="ChEBI" id="CHEBI:29035"/>
    </cofactor>
    <text evidence="1">Binds 1 Mg(2+) or Mn(2+) ion per subunit.</text>
</comment>
<comment type="pathway">
    <text evidence="2">Sulfur metabolism; glutathione biosynthesis; glutathione from L-cysteine and L-glutamate: step 2/2.</text>
</comment>
<comment type="similarity">
    <text evidence="2">Belongs to the prokaryotic GSH synthase family.</text>
</comment>
<keyword id="KW-0067">ATP-binding</keyword>
<keyword id="KW-0317">Glutathione biosynthesis</keyword>
<keyword id="KW-0436">Ligase</keyword>
<keyword id="KW-0460">Magnesium</keyword>
<keyword id="KW-0464">Manganese</keyword>
<keyword id="KW-0479">Metal-binding</keyword>
<keyword id="KW-0547">Nucleotide-binding</keyword>
<feature type="chain" id="PRO_0000197498" description="Glutathione synthetase">
    <location>
        <begin position="1"/>
        <end position="314"/>
    </location>
</feature>
<feature type="domain" description="ATP-grasp" evidence="2">
    <location>
        <begin position="125"/>
        <end position="311"/>
    </location>
</feature>
<feature type="binding site" evidence="2">
    <location>
        <begin position="151"/>
        <end position="208"/>
    </location>
    <ligand>
        <name>ATP</name>
        <dbReference type="ChEBI" id="CHEBI:30616"/>
    </ligand>
</feature>
<feature type="binding site" evidence="2">
    <location>
        <position position="282"/>
    </location>
    <ligand>
        <name>Mg(2+)</name>
        <dbReference type="ChEBI" id="CHEBI:18420"/>
    </ligand>
</feature>
<feature type="binding site" evidence="2">
    <location>
        <position position="284"/>
    </location>
    <ligand>
        <name>Mg(2+)</name>
        <dbReference type="ChEBI" id="CHEBI:18420"/>
    </ligand>
</feature>
<organism>
    <name type="scientific">Xylella fastidiosa (strain 9a5c)</name>
    <dbReference type="NCBI Taxonomy" id="160492"/>
    <lineage>
        <taxon>Bacteria</taxon>
        <taxon>Pseudomonadati</taxon>
        <taxon>Pseudomonadota</taxon>
        <taxon>Gammaproteobacteria</taxon>
        <taxon>Lysobacterales</taxon>
        <taxon>Lysobacteraceae</taxon>
        <taxon>Xylella</taxon>
    </lineage>
</organism>
<name>GSHB_XYLFA</name>
<gene>
    <name evidence="2" type="primary">gshB</name>
    <name type="ordered locus">XF_1956</name>
</gene>